<gene>
    <name evidence="5" type="primary">LTL1</name>
    <name evidence="8" type="ordered locus">At3g04290</name>
    <name evidence="9" type="ORF">T6K12.9</name>
</gene>
<proteinExistence type="evidence at protein level"/>
<dbReference type="EC" id="3.1.1.-" evidence="7"/>
<dbReference type="EMBL" id="AC016829">
    <property type="protein sequence ID" value="AAF26785.1"/>
    <property type="molecule type" value="Genomic_DNA"/>
</dbReference>
<dbReference type="EMBL" id="CP002686">
    <property type="protein sequence ID" value="AEE74063.1"/>
    <property type="molecule type" value="Genomic_DNA"/>
</dbReference>
<dbReference type="EMBL" id="AY085128">
    <property type="protein sequence ID" value="AAM61681.1"/>
    <property type="molecule type" value="mRNA"/>
</dbReference>
<dbReference type="RefSeq" id="NP_187079.1">
    <property type="nucleotide sequence ID" value="NM_111300.4"/>
</dbReference>
<dbReference type="SMR" id="Q9M8Y5"/>
<dbReference type="FunCoup" id="Q9M8Y5">
    <property type="interactions" value="106"/>
</dbReference>
<dbReference type="STRING" id="3702.Q9M8Y5"/>
<dbReference type="GlyCosmos" id="Q9M8Y5">
    <property type="glycosylation" value="2 sites, No reported glycans"/>
</dbReference>
<dbReference type="GlyGen" id="Q9M8Y5">
    <property type="glycosylation" value="2 sites"/>
</dbReference>
<dbReference type="PaxDb" id="3702-AT3G04290.1"/>
<dbReference type="ProteomicsDB" id="238505"/>
<dbReference type="EnsemblPlants" id="AT3G04290.1">
    <property type="protein sequence ID" value="AT3G04290.1"/>
    <property type="gene ID" value="AT3G04290"/>
</dbReference>
<dbReference type="GeneID" id="819584"/>
<dbReference type="Gramene" id="AT3G04290.1">
    <property type="protein sequence ID" value="AT3G04290.1"/>
    <property type="gene ID" value="AT3G04290"/>
</dbReference>
<dbReference type="KEGG" id="ath:AT3G04290"/>
<dbReference type="Araport" id="AT3G04290"/>
<dbReference type="TAIR" id="AT3G04290">
    <property type="gene designation" value="LTL1"/>
</dbReference>
<dbReference type="eggNOG" id="ENOG502QQP0">
    <property type="taxonomic scope" value="Eukaryota"/>
</dbReference>
<dbReference type="HOGENOM" id="CLU_015101_0_0_1"/>
<dbReference type="InParanoid" id="Q9M8Y5"/>
<dbReference type="OMA" id="ANAYEMH"/>
<dbReference type="PhylomeDB" id="Q9M8Y5"/>
<dbReference type="BioCyc" id="ARA:AT3G04290-MONOMER"/>
<dbReference type="PRO" id="PR:Q9M8Y5"/>
<dbReference type="Proteomes" id="UP000006548">
    <property type="component" value="Chromosome 3"/>
</dbReference>
<dbReference type="ExpressionAtlas" id="Q9M8Y5">
    <property type="expression patterns" value="baseline and differential"/>
</dbReference>
<dbReference type="GO" id="GO:0005576">
    <property type="term" value="C:extracellular region"/>
    <property type="evidence" value="ECO:0007669"/>
    <property type="project" value="UniProtKB-SubCell"/>
</dbReference>
<dbReference type="GO" id="GO:0016788">
    <property type="term" value="F:hydrolase activity, acting on ester bonds"/>
    <property type="evidence" value="ECO:0007669"/>
    <property type="project" value="InterPro"/>
</dbReference>
<dbReference type="GO" id="GO:0042538">
    <property type="term" value="P:hyperosmotic salinity response"/>
    <property type="evidence" value="ECO:0000315"/>
    <property type="project" value="UniProtKB"/>
</dbReference>
<dbReference type="GO" id="GO:0016042">
    <property type="term" value="P:lipid catabolic process"/>
    <property type="evidence" value="ECO:0007669"/>
    <property type="project" value="UniProtKB-KW"/>
</dbReference>
<dbReference type="GO" id="GO:0010226">
    <property type="term" value="P:response to lithium ion"/>
    <property type="evidence" value="ECO:0000315"/>
    <property type="project" value="UniProtKB"/>
</dbReference>
<dbReference type="GO" id="GO:0009751">
    <property type="term" value="P:response to salicylic acid"/>
    <property type="evidence" value="ECO:0000314"/>
    <property type="project" value="UniProtKB"/>
</dbReference>
<dbReference type="CDD" id="cd01837">
    <property type="entry name" value="SGNH_plant_lipase_like"/>
    <property type="match status" value="1"/>
</dbReference>
<dbReference type="FunFam" id="3.40.50.1110:FF:000003">
    <property type="entry name" value="GDSL esterase/lipase APG"/>
    <property type="match status" value="1"/>
</dbReference>
<dbReference type="Gene3D" id="3.40.50.1110">
    <property type="entry name" value="SGNH hydrolase"/>
    <property type="match status" value="1"/>
</dbReference>
<dbReference type="InterPro" id="IPR001087">
    <property type="entry name" value="GDSL"/>
</dbReference>
<dbReference type="InterPro" id="IPR051058">
    <property type="entry name" value="GDSL_Est/Lipase"/>
</dbReference>
<dbReference type="InterPro" id="IPR036514">
    <property type="entry name" value="SGNH_hydro_sf"/>
</dbReference>
<dbReference type="InterPro" id="IPR035669">
    <property type="entry name" value="SGNH_plant_lipase-like"/>
</dbReference>
<dbReference type="PANTHER" id="PTHR45648:SF167">
    <property type="entry name" value="GDSL ESTERASE_LIPASE LTL1"/>
    <property type="match status" value="1"/>
</dbReference>
<dbReference type="PANTHER" id="PTHR45648">
    <property type="entry name" value="GDSL LIPASE/ACYLHYDROLASE FAMILY PROTEIN (AFU_ORTHOLOGUE AFUA_4G14700)"/>
    <property type="match status" value="1"/>
</dbReference>
<dbReference type="Pfam" id="PF00657">
    <property type="entry name" value="Lipase_GDSL"/>
    <property type="match status" value="1"/>
</dbReference>
<dbReference type="SUPFAM" id="SSF52266">
    <property type="entry name" value="SGNH hydrolase"/>
    <property type="match status" value="1"/>
</dbReference>
<evidence type="ECO:0000250" key="1"/>
<evidence type="ECO:0000255" key="2"/>
<evidence type="ECO:0000269" key="3">
    <source>
    </source>
</evidence>
<evidence type="ECO:0000269" key="4">
    <source>
    </source>
</evidence>
<evidence type="ECO:0000303" key="5">
    <source>
    </source>
</evidence>
<evidence type="ECO:0000303" key="6">
    <source>
    </source>
</evidence>
<evidence type="ECO:0000305" key="7"/>
<evidence type="ECO:0000312" key="8">
    <source>
        <dbReference type="Araport" id="AT3G04290"/>
    </source>
</evidence>
<evidence type="ECO:0000312" key="9">
    <source>
        <dbReference type="EMBL" id="AAF26785.1"/>
    </source>
</evidence>
<comment type="function">
    <text evidence="3">Involved in the mechanisms of salt tolerance (PubMed:16930315). Mediates resistance to LiCl and NaCl (PubMed:16930315).</text>
</comment>
<comment type="subunit">
    <text evidence="4">Binds to VLG at the endomembrane system.</text>
</comment>
<comment type="subcellular location">
    <subcellularLocation>
        <location evidence="7">Secreted</location>
    </subcellularLocation>
</comment>
<comment type="tissue specificity">
    <text evidence="3">Mostly expressed in flowers, reproductive stems and rosette leaves, and, to a lower extent, in roots.</text>
</comment>
<comment type="induction">
    <text evidence="3">By high salinity (LiCl and NaCl). Also induced transiently by salicylic acid (SA).</text>
</comment>
<comment type="similarity">
    <text evidence="7">Belongs to the 'GDSL' lipolytic enzyme family.</text>
</comment>
<accession>Q9M8Y5</accession>
<keyword id="KW-0325">Glycoprotein</keyword>
<keyword id="KW-0378">Hydrolase</keyword>
<keyword id="KW-0442">Lipid degradation</keyword>
<keyword id="KW-0443">Lipid metabolism</keyword>
<keyword id="KW-1185">Reference proteome</keyword>
<keyword id="KW-0964">Secreted</keyword>
<keyword id="KW-0732">Signal</keyword>
<name>LTL1_ARATH</name>
<feature type="signal peptide" evidence="2">
    <location>
        <begin position="1"/>
        <end position="27"/>
    </location>
</feature>
<feature type="chain" id="PRO_0000367342" description="GDSL esterase/lipase LTL1">
    <location>
        <begin position="28"/>
        <end position="366"/>
    </location>
</feature>
<feature type="active site" description="Nucleophile" evidence="1">
    <location>
        <position position="36"/>
    </location>
</feature>
<feature type="active site" evidence="1">
    <location>
        <position position="326"/>
    </location>
</feature>
<feature type="active site" evidence="1">
    <location>
        <position position="329"/>
    </location>
</feature>
<feature type="glycosylation site" description="N-linked (GlcNAc...) asparagine" evidence="2">
    <location>
        <position position="117"/>
    </location>
</feature>
<feature type="glycosylation site" description="N-linked (GlcNAc...) asparagine" evidence="2">
    <location>
        <position position="354"/>
    </location>
</feature>
<reference key="1">
    <citation type="journal article" date="2000" name="Nature">
        <title>Sequence and analysis of chromosome 3 of the plant Arabidopsis thaliana.</title>
        <authorList>
            <person name="Salanoubat M."/>
            <person name="Lemcke K."/>
            <person name="Rieger M."/>
            <person name="Ansorge W."/>
            <person name="Unseld M."/>
            <person name="Fartmann B."/>
            <person name="Valle G."/>
            <person name="Bloecker H."/>
            <person name="Perez-Alonso M."/>
            <person name="Obermaier B."/>
            <person name="Delseny M."/>
            <person name="Boutry M."/>
            <person name="Grivell L.A."/>
            <person name="Mache R."/>
            <person name="Puigdomenech P."/>
            <person name="De Simone V."/>
            <person name="Choisne N."/>
            <person name="Artiguenave F."/>
            <person name="Robert C."/>
            <person name="Brottier P."/>
            <person name="Wincker P."/>
            <person name="Cattolico L."/>
            <person name="Weissenbach J."/>
            <person name="Saurin W."/>
            <person name="Quetier F."/>
            <person name="Schaefer M."/>
            <person name="Mueller-Auer S."/>
            <person name="Gabel C."/>
            <person name="Fuchs M."/>
            <person name="Benes V."/>
            <person name="Wurmbach E."/>
            <person name="Drzonek H."/>
            <person name="Erfle H."/>
            <person name="Jordan N."/>
            <person name="Bangert S."/>
            <person name="Wiedelmann R."/>
            <person name="Kranz H."/>
            <person name="Voss H."/>
            <person name="Holland R."/>
            <person name="Brandt P."/>
            <person name="Nyakatura G."/>
            <person name="Vezzi A."/>
            <person name="D'Angelo M."/>
            <person name="Pallavicini A."/>
            <person name="Toppo S."/>
            <person name="Simionati B."/>
            <person name="Conrad A."/>
            <person name="Hornischer K."/>
            <person name="Kauer G."/>
            <person name="Loehnert T.-H."/>
            <person name="Nordsiek G."/>
            <person name="Reichelt J."/>
            <person name="Scharfe M."/>
            <person name="Schoen O."/>
            <person name="Bargues M."/>
            <person name="Terol J."/>
            <person name="Climent J."/>
            <person name="Navarro P."/>
            <person name="Collado C."/>
            <person name="Perez-Perez A."/>
            <person name="Ottenwaelder B."/>
            <person name="Duchemin D."/>
            <person name="Cooke R."/>
            <person name="Laudie M."/>
            <person name="Berger-Llauro C."/>
            <person name="Purnelle B."/>
            <person name="Masuy D."/>
            <person name="de Haan M."/>
            <person name="Maarse A.C."/>
            <person name="Alcaraz J.-P."/>
            <person name="Cottet A."/>
            <person name="Casacuberta E."/>
            <person name="Monfort A."/>
            <person name="Argiriou A."/>
            <person name="Flores M."/>
            <person name="Liguori R."/>
            <person name="Vitale D."/>
            <person name="Mannhaupt G."/>
            <person name="Haase D."/>
            <person name="Schoof H."/>
            <person name="Rudd S."/>
            <person name="Zaccaria P."/>
            <person name="Mewes H.-W."/>
            <person name="Mayer K.F.X."/>
            <person name="Kaul S."/>
            <person name="Town C.D."/>
            <person name="Koo H.L."/>
            <person name="Tallon L.J."/>
            <person name="Jenkins J."/>
            <person name="Rooney T."/>
            <person name="Rizzo M."/>
            <person name="Walts A."/>
            <person name="Utterback T."/>
            <person name="Fujii C.Y."/>
            <person name="Shea T.P."/>
            <person name="Creasy T.H."/>
            <person name="Haas B."/>
            <person name="Maiti R."/>
            <person name="Wu D."/>
            <person name="Peterson J."/>
            <person name="Van Aken S."/>
            <person name="Pai G."/>
            <person name="Militscher J."/>
            <person name="Sellers P."/>
            <person name="Gill J.E."/>
            <person name="Feldblyum T.V."/>
            <person name="Preuss D."/>
            <person name="Lin X."/>
            <person name="Nierman W.C."/>
            <person name="Salzberg S.L."/>
            <person name="White O."/>
            <person name="Venter J.C."/>
            <person name="Fraser C.M."/>
            <person name="Kaneko T."/>
            <person name="Nakamura Y."/>
            <person name="Sato S."/>
            <person name="Kato T."/>
            <person name="Asamizu E."/>
            <person name="Sasamoto S."/>
            <person name="Kimura T."/>
            <person name="Idesawa K."/>
            <person name="Kawashima K."/>
            <person name="Kishida Y."/>
            <person name="Kiyokawa C."/>
            <person name="Kohara M."/>
            <person name="Matsumoto M."/>
            <person name="Matsuno A."/>
            <person name="Muraki A."/>
            <person name="Nakayama S."/>
            <person name="Nakazaki N."/>
            <person name="Shinpo S."/>
            <person name="Takeuchi C."/>
            <person name="Wada T."/>
            <person name="Watanabe A."/>
            <person name="Yamada M."/>
            <person name="Yasuda M."/>
            <person name="Tabata S."/>
        </authorList>
    </citation>
    <scope>NUCLEOTIDE SEQUENCE [LARGE SCALE GENOMIC DNA]</scope>
    <source>
        <strain>cv. Columbia</strain>
    </source>
</reference>
<reference key="2">
    <citation type="journal article" date="2017" name="Plant J.">
        <title>Araport11: a complete reannotation of the Arabidopsis thaliana reference genome.</title>
        <authorList>
            <person name="Cheng C.Y."/>
            <person name="Krishnakumar V."/>
            <person name="Chan A.P."/>
            <person name="Thibaud-Nissen F."/>
            <person name="Schobel S."/>
            <person name="Town C.D."/>
        </authorList>
    </citation>
    <scope>GENOME REANNOTATION</scope>
    <source>
        <strain>cv. Columbia</strain>
    </source>
</reference>
<reference key="3">
    <citation type="submission" date="2002-03" db="EMBL/GenBank/DDBJ databases">
        <title>Full-length cDNA from Arabidopsis thaliana.</title>
        <authorList>
            <person name="Brover V.V."/>
            <person name="Troukhan M.E."/>
            <person name="Alexandrov N.A."/>
            <person name="Lu Y.-P."/>
            <person name="Flavell R.B."/>
            <person name="Feldmann K.A."/>
        </authorList>
    </citation>
    <scope>NUCLEOTIDE SEQUENCE [LARGE SCALE MRNA]</scope>
</reference>
<reference key="4">
    <citation type="journal article" date="2004" name="Prog. Lipid Res.">
        <title>GDSL family of serine esterases/lipases.</title>
        <authorList>
            <person name="Akoh C.C."/>
            <person name="Lee G.-C."/>
            <person name="Liaw Y.-C."/>
            <person name="Huang T.-H."/>
            <person name="Shaw J.-F."/>
        </authorList>
    </citation>
    <scope>REVIEW</scope>
</reference>
<reference key="5">
    <citation type="journal article" date="2006" name="Plant Cell Environ.">
        <title>Overexpression of Arabidopsis thaliana LTL1, a salt-induced gene encoding a GDSL-motif lipase, increases salt tolerance in yeast and transgenic plants.</title>
        <authorList>
            <person name="Naranjo M.A."/>
            <person name="Forment J."/>
            <person name="Roldan M."/>
            <person name="Serrano R."/>
            <person name="Vicente O."/>
        </authorList>
    </citation>
    <scope>FUNCTION</scope>
    <scope>TISSUE SPECIFICITY</scope>
    <scope>INDUCTION BY HIGH SALINITY AND SA</scope>
</reference>
<reference key="6">
    <citation type="journal article" date="2008" name="Pak. J. Biol. Sci.">
        <title>Sequence analysis of GDSL lipase gene family in Arabidopsis thaliana.</title>
        <authorList>
            <person name="Ling H."/>
        </authorList>
    </citation>
    <scope>GENE FAMILY</scope>
</reference>
<reference key="7">
    <citation type="journal article" date="2017" name="Plant J.">
        <title>The DC1-domain protein VACUOLELESS GAMETOPHYTES is essential for development of female and male gametophytes in Arabidopsis.</title>
        <authorList>
            <person name="D'Ippolito S."/>
            <person name="Arias L.A."/>
            <person name="Casalongue C.A."/>
            <person name="Pagnussat G.C."/>
            <person name="Fiol D.F."/>
        </authorList>
    </citation>
    <scope>INTERACTION WITH VLG</scope>
    <source>
        <strain>cv. Columbia</strain>
    </source>
</reference>
<protein>
    <recommendedName>
        <fullName evidence="6">GDSL esterase/lipase LTL1</fullName>
        <ecNumber evidence="7">3.1.1.-</ecNumber>
    </recommendedName>
    <alternativeName>
        <fullName evidence="6">Extracellular lipase LTL1</fullName>
    </alternativeName>
    <alternativeName>
        <fullName evidence="5">Lithium-tolerant lipase 1</fullName>
        <shortName evidence="5">AtLTL1</shortName>
        <shortName evidence="5">Li-tolerant lipase 1</shortName>
    </alternativeName>
</protein>
<organism>
    <name type="scientific">Arabidopsis thaliana</name>
    <name type="common">Mouse-ear cress</name>
    <dbReference type="NCBI Taxonomy" id="3702"/>
    <lineage>
        <taxon>Eukaryota</taxon>
        <taxon>Viridiplantae</taxon>
        <taxon>Streptophyta</taxon>
        <taxon>Embryophyta</taxon>
        <taxon>Tracheophyta</taxon>
        <taxon>Spermatophyta</taxon>
        <taxon>Magnoliopsida</taxon>
        <taxon>eudicotyledons</taxon>
        <taxon>Gunneridae</taxon>
        <taxon>Pentapetalae</taxon>
        <taxon>rosids</taxon>
        <taxon>malvids</taxon>
        <taxon>Brassicales</taxon>
        <taxon>Brassicaceae</taxon>
        <taxon>Camelineae</taxon>
        <taxon>Arabidopsis</taxon>
    </lineage>
</organism>
<sequence>MNINCSPLGFLISLFFIVTFLAPQVKSRAFFVFGDSLVDNGNNDYLVTTARADNYPYGIDYPTRRPTGRFSNGLNIPDIISEAIGMPSTLPYLSPHLTGENLLVGANFASAGIGILNDTGIQFVNIIRISKQMEYFEQYQLRVSALIGPEATQQLVNQALVLITLGGNDFVNNYYLIPFSARSRQYALPDYVVYLISEYGKILRKLYELGARRVLVTGTGAMGCAPAELAQHSRNGECYGALQTAAALFNPQLVDLIASVNAEIGQDVFVAANAYQMNMDYLSNPEQFGFVTSKVACCGQGPYNGIGLCTPVSNLCPNRDLYAFWDAFHPTEKANRIIVNQILTGSSKYMHPMNLSTAMLLDSSKI</sequence>